<gene>
    <name evidence="1" type="primary">atpA</name>
    <name type="ordered locus">ECED1_4424</name>
</gene>
<evidence type="ECO:0000255" key="1">
    <source>
        <dbReference type="HAMAP-Rule" id="MF_01346"/>
    </source>
</evidence>
<protein>
    <recommendedName>
        <fullName evidence="1">ATP synthase subunit alpha</fullName>
        <ecNumber evidence="1">7.1.2.2</ecNumber>
    </recommendedName>
    <alternativeName>
        <fullName evidence="1">ATP synthase F1 sector subunit alpha</fullName>
    </alternativeName>
    <alternativeName>
        <fullName evidence="1">F-ATPase subunit alpha</fullName>
    </alternativeName>
</protein>
<comment type="function">
    <text evidence="1">Produces ATP from ADP in the presence of a proton gradient across the membrane. The alpha chain is a regulatory subunit.</text>
</comment>
<comment type="catalytic activity">
    <reaction evidence="1">
        <text>ATP + H2O + 4 H(+)(in) = ADP + phosphate + 5 H(+)(out)</text>
        <dbReference type="Rhea" id="RHEA:57720"/>
        <dbReference type="ChEBI" id="CHEBI:15377"/>
        <dbReference type="ChEBI" id="CHEBI:15378"/>
        <dbReference type="ChEBI" id="CHEBI:30616"/>
        <dbReference type="ChEBI" id="CHEBI:43474"/>
        <dbReference type="ChEBI" id="CHEBI:456216"/>
        <dbReference type="EC" id="7.1.2.2"/>
    </reaction>
</comment>
<comment type="subunit">
    <text evidence="1">F-type ATPases have 2 components, CF(1) - the catalytic core - and CF(0) - the membrane proton channel. CF(1) has five subunits: alpha(3), beta(3), gamma(1), delta(1), epsilon(1). CF(0) has three main subunits: a(1), b(2) and c(9-12). The alpha and beta chains form an alternating ring which encloses part of the gamma chain. CF(1) is attached to CF(0) by a central stalk formed by the gamma and epsilon chains, while a peripheral stalk is formed by the delta and b chains.</text>
</comment>
<comment type="subcellular location">
    <subcellularLocation>
        <location evidence="1">Cell inner membrane</location>
        <topology evidence="1">Peripheral membrane protein</topology>
    </subcellularLocation>
</comment>
<comment type="similarity">
    <text evidence="1">Belongs to the ATPase alpha/beta chains family.</text>
</comment>
<feature type="chain" id="PRO_1000166539" description="ATP synthase subunit alpha">
    <location>
        <begin position="1"/>
        <end position="513"/>
    </location>
</feature>
<feature type="binding site" evidence="1">
    <location>
        <begin position="169"/>
        <end position="176"/>
    </location>
    <ligand>
        <name>ATP</name>
        <dbReference type="ChEBI" id="CHEBI:30616"/>
    </ligand>
</feature>
<feature type="site" description="Required for activity" evidence="1">
    <location>
        <position position="373"/>
    </location>
</feature>
<name>ATPA_ECO81</name>
<keyword id="KW-0066">ATP synthesis</keyword>
<keyword id="KW-0067">ATP-binding</keyword>
<keyword id="KW-0997">Cell inner membrane</keyword>
<keyword id="KW-1003">Cell membrane</keyword>
<keyword id="KW-0139">CF(1)</keyword>
<keyword id="KW-0375">Hydrogen ion transport</keyword>
<keyword id="KW-0406">Ion transport</keyword>
<keyword id="KW-0472">Membrane</keyword>
<keyword id="KW-0547">Nucleotide-binding</keyword>
<keyword id="KW-1278">Translocase</keyword>
<keyword id="KW-0813">Transport</keyword>
<organism>
    <name type="scientific">Escherichia coli O81 (strain ED1a)</name>
    <dbReference type="NCBI Taxonomy" id="585397"/>
    <lineage>
        <taxon>Bacteria</taxon>
        <taxon>Pseudomonadati</taxon>
        <taxon>Pseudomonadota</taxon>
        <taxon>Gammaproteobacteria</taxon>
        <taxon>Enterobacterales</taxon>
        <taxon>Enterobacteriaceae</taxon>
        <taxon>Escherichia</taxon>
    </lineage>
</organism>
<accession>B7N2H3</accession>
<dbReference type="EC" id="7.1.2.2" evidence="1"/>
<dbReference type="EMBL" id="CU928162">
    <property type="protein sequence ID" value="CAR10544.2"/>
    <property type="molecule type" value="Genomic_DNA"/>
</dbReference>
<dbReference type="RefSeq" id="WP_001176745.1">
    <property type="nucleotide sequence ID" value="NC_011745.1"/>
</dbReference>
<dbReference type="SMR" id="B7N2H3"/>
<dbReference type="GeneID" id="93778233"/>
<dbReference type="KEGG" id="ecq:ECED1_4424"/>
<dbReference type="HOGENOM" id="CLU_010091_2_1_6"/>
<dbReference type="Proteomes" id="UP000000748">
    <property type="component" value="Chromosome"/>
</dbReference>
<dbReference type="GO" id="GO:0005886">
    <property type="term" value="C:plasma membrane"/>
    <property type="evidence" value="ECO:0007669"/>
    <property type="project" value="UniProtKB-SubCell"/>
</dbReference>
<dbReference type="GO" id="GO:0045259">
    <property type="term" value="C:proton-transporting ATP synthase complex"/>
    <property type="evidence" value="ECO:0007669"/>
    <property type="project" value="UniProtKB-KW"/>
</dbReference>
<dbReference type="GO" id="GO:0043531">
    <property type="term" value="F:ADP binding"/>
    <property type="evidence" value="ECO:0007669"/>
    <property type="project" value="TreeGrafter"/>
</dbReference>
<dbReference type="GO" id="GO:0005524">
    <property type="term" value="F:ATP binding"/>
    <property type="evidence" value="ECO:0007669"/>
    <property type="project" value="UniProtKB-UniRule"/>
</dbReference>
<dbReference type="GO" id="GO:0046933">
    <property type="term" value="F:proton-transporting ATP synthase activity, rotational mechanism"/>
    <property type="evidence" value="ECO:0007669"/>
    <property type="project" value="UniProtKB-UniRule"/>
</dbReference>
<dbReference type="CDD" id="cd18113">
    <property type="entry name" value="ATP-synt_F1_alpha_C"/>
    <property type="match status" value="1"/>
</dbReference>
<dbReference type="CDD" id="cd18116">
    <property type="entry name" value="ATP-synt_F1_alpha_N"/>
    <property type="match status" value="1"/>
</dbReference>
<dbReference type="CDD" id="cd01132">
    <property type="entry name" value="F1-ATPase_alpha_CD"/>
    <property type="match status" value="1"/>
</dbReference>
<dbReference type="FunFam" id="1.20.150.20:FF:000001">
    <property type="entry name" value="ATP synthase subunit alpha"/>
    <property type="match status" value="1"/>
</dbReference>
<dbReference type="FunFam" id="2.40.30.20:FF:000001">
    <property type="entry name" value="ATP synthase subunit alpha"/>
    <property type="match status" value="1"/>
</dbReference>
<dbReference type="FunFam" id="3.40.50.300:FF:000002">
    <property type="entry name" value="ATP synthase subunit alpha"/>
    <property type="match status" value="1"/>
</dbReference>
<dbReference type="Gene3D" id="2.40.30.20">
    <property type="match status" value="1"/>
</dbReference>
<dbReference type="Gene3D" id="1.20.150.20">
    <property type="entry name" value="ATP synthase alpha/beta chain, C-terminal domain"/>
    <property type="match status" value="1"/>
</dbReference>
<dbReference type="Gene3D" id="3.40.50.300">
    <property type="entry name" value="P-loop containing nucleotide triphosphate hydrolases"/>
    <property type="match status" value="1"/>
</dbReference>
<dbReference type="HAMAP" id="MF_01346">
    <property type="entry name" value="ATP_synth_alpha_bact"/>
    <property type="match status" value="1"/>
</dbReference>
<dbReference type="InterPro" id="IPR023366">
    <property type="entry name" value="ATP_synth_asu-like_sf"/>
</dbReference>
<dbReference type="InterPro" id="IPR000793">
    <property type="entry name" value="ATP_synth_asu_C"/>
</dbReference>
<dbReference type="InterPro" id="IPR038376">
    <property type="entry name" value="ATP_synth_asu_C_sf"/>
</dbReference>
<dbReference type="InterPro" id="IPR033732">
    <property type="entry name" value="ATP_synth_F1_a_nt-bd_dom"/>
</dbReference>
<dbReference type="InterPro" id="IPR005294">
    <property type="entry name" value="ATP_synth_F1_asu"/>
</dbReference>
<dbReference type="InterPro" id="IPR020003">
    <property type="entry name" value="ATPase_a/bsu_AS"/>
</dbReference>
<dbReference type="InterPro" id="IPR004100">
    <property type="entry name" value="ATPase_F1/V1/A1_a/bsu_N"/>
</dbReference>
<dbReference type="InterPro" id="IPR036121">
    <property type="entry name" value="ATPase_F1/V1/A1_a/bsu_N_sf"/>
</dbReference>
<dbReference type="InterPro" id="IPR000194">
    <property type="entry name" value="ATPase_F1/V1/A1_a/bsu_nucl-bd"/>
</dbReference>
<dbReference type="InterPro" id="IPR027417">
    <property type="entry name" value="P-loop_NTPase"/>
</dbReference>
<dbReference type="NCBIfam" id="TIGR00962">
    <property type="entry name" value="atpA"/>
    <property type="match status" value="1"/>
</dbReference>
<dbReference type="NCBIfam" id="NF009884">
    <property type="entry name" value="PRK13343.1"/>
    <property type="match status" value="1"/>
</dbReference>
<dbReference type="PANTHER" id="PTHR48082">
    <property type="entry name" value="ATP SYNTHASE SUBUNIT ALPHA, MITOCHONDRIAL"/>
    <property type="match status" value="1"/>
</dbReference>
<dbReference type="PANTHER" id="PTHR48082:SF2">
    <property type="entry name" value="ATP SYNTHASE SUBUNIT ALPHA, MITOCHONDRIAL"/>
    <property type="match status" value="1"/>
</dbReference>
<dbReference type="Pfam" id="PF00006">
    <property type="entry name" value="ATP-synt_ab"/>
    <property type="match status" value="1"/>
</dbReference>
<dbReference type="Pfam" id="PF00306">
    <property type="entry name" value="ATP-synt_ab_C"/>
    <property type="match status" value="1"/>
</dbReference>
<dbReference type="Pfam" id="PF02874">
    <property type="entry name" value="ATP-synt_ab_N"/>
    <property type="match status" value="1"/>
</dbReference>
<dbReference type="SUPFAM" id="SSF47917">
    <property type="entry name" value="C-terminal domain of alpha and beta subunits of F1 ATP synthase"/>
    <property type="match status" value="1"/>
</dbReference>
<dbReference type="SUPFAM" id="SSF50615">
    <property type="entry name" value="N-terminal domain of alpha and beta subunits of F1 ATP synthase"/>
    <property type="match status" value="1"/>
</dbReference>
<dbReference type="SUPFAM" id="SSF52540">
    <property type="entry name" value="P-loop containing nucleoside triphosphate hydrolases"/>
    <property type="match status" value="1"/>
</dbReference>
<dbReference type="PROSITE" id="PS00152">
    <property type="entry name" value="ATPASE_ALPHA_BETA"/>
    <property type="match status" value="1"/>
</dbReference>
<sequence>MQLNSTEISELIKQRIAQFNVVSEAHNEGTIVSVSDGVIRIHGLADCMQGEMISLPGNRYAIALNLERDSVGAVVMGPYADLAEGMKVKCTGRILEVPVGRGLLGRVVNTLGAPIDGKGPLDHDGFSAVEAIAPGVIERQSVDQPVQTGYKAVDSMIPIGRGQRELIIGDRQTGKTALAIDAIINQRDSGIKCIYVAIGQKASTISNVVRKLEEHGALANTIVVVATASESAALQYLAPYAGCAMGEYFRDRGEDALIIYDDLSKQAVAYRQISLLLRRPPGREAFPGDVFYLHSRLLERAARVNAEYVEAFTKGEVKGKTGSLTALPIIETQAGDVSAFVPTNVISITDGQIFLETNLFNAGIRPAVNPGISVSRVGGAAQTKIMKKLSGGIRTALAQYRELAAFSQFASDLDDATRKQLDHGQKVTELLKQKQYAPMSVAQQSLVLFAAERGYLADVELSKIGSFEAALLAYVDRDHAPLMQEINQTGGYNDEIEGKLKGILDSFKATQSW</sequence>
<reference key="1">
    <citation type="journal article" date="2009" name="PLoS Genet.">
        <title>Organised genome dynamics in the Escherichia coli species results in highly diverse adaptive paths.</title>
        <authorList>
            <person name="Touchon M."/>
            <person name="Hoede C."/>
            <person name="Tenaillon O."/>
            <person name="Barbe V."/>
            <person name="Baeriswyl S."/>
            <person name="Bidet P."/>
            <person name="Bingen E."/>
            <person name="Bonacorsi S."/>
            <person name="Bouchier C."/>
            <person name="Bouvet O."/>
            <person name="Calteau A."/>
            <person name="Chiapello H."/>
            <person name="Clermont O."/>
            <person name="Cruveiller S."/>
            <person name="Danchin A."/>
            <person name="Diard M."/>
            <person name="Dossat C."/>
            <person name="Karoui M.E."/>
            <person name="Frapy E."/>
            <person name="Garry L."/>
            <person name="Ghigo J.M."/>
            <person name="Gilles A.M."/>
            <person name="Johnson J."/>
            <person name="Le Bouguenec C."/>
            <person name="Lescat M."/>
            <person name="Mangenot S."/>
            <person name="Martinez-Jehanne V."/>
            <person name="Matic I."/>
            <person name="Nassif X."/>
            <person name="Oztas S."/>
            <person name="Petit M.A."/>
            <person name="Pichon C."/>
            <person name="Rouy Z."/>
            <person name="Ruf C.S."/>
            <person name="Schneider D."/>
            <person name="Tourret J."/>
            <person name="Vacherie B."/>
            <person name="Vallenet D."/>
            <person name="Medigue C."/>
            <person name="Rocha E.P.C."/>
            <person name="Denamur E."/>
        </authorList>
    </citation>
    <scope>NUCLEOTIDE SEQUENCE [LARGE SCALE GENOMIC DNA]</scope>
    <source>
        <strain>ED1a</strain>
    </source>
</reference>
<proteinExistence type="inferred from homology"/>